<name>RS12_BORDL</name>
<evidence type="ECO:0000250" key="1"/>
<evidence type="ECO:0000255" key="2">
    <source>
        <dbReference type="HAMAP-Rule" id="MF_00403"/>
    </source>
</evidence>
<evidence type="ECO:0000256" key="3">
    <source>
        <dbReference type="SAM" id="MobiDB-lite"/>
    </source>
</evidence>
<evidence type="ECO:0000305" key="4"/>
<organism>
    <name type="scientific">Borrelia duttonii (strain Ly)</name>
    <dbReference type="NCBI Taxonomy" id="412419"/>
    <lineage>
        <taxon>Bacteria</taxon>
        <taxon>Pseudomonadati</taxon>
        <taxon>Spirochaetota</taxon>
        <taxon>Spirochaetia</taxon>
        <taxon>Spirochaetales</taxon>
        <taxon>Borreliaceae</taxon>
        <taxon>Borrelia</taxon>
    </lineage>
</organism>
<sequence length="124" mass="13833">MPTINQLIRKPRKSQKEKTASPALQNCPQKRGICTRVMTVTPKKPNSALRKVARVRLSNGFEVTAYIPGIGHNLQEHSVVLIRGGRVKDLPGVRYHIIRGAKDTLGVNNRKQGRSKYGTKRPKA</sequence>
<protein>
    <recommendedName>
        <fullName evidence="2">Small ribosomal subunit protein uS12</fullName>
    </recommendedName>
    <alternativeName>
        <fullName evidence="4">30S ribosomal protein S12</fullName>
    </alternativeName>
</protein>
<comment type="function">
    <text evidence="2">With S4 and S5 plays an important role in translational accuracy.</text>
</comment>
<comment type="function">
    <text evidence="2">Interacts with and stabilizes bases of the 16S rRNA that are involved in tRNA selection in the A site and with the mRNA backbone. Located at the interface of the 30S and 50S subunits, it traverses the body of the 30S subunit contacting proteins on the other side and probably holding the rRNA structure together. The combined cluster of proteins S8, S12 and S17 appears to hold together the shoulder and platform of the 30S subunit.</text>
</comment>
<comment type="subunit">
    <text evidence="2">Part of the 30S ribosomal subunit. Contacts proteins S8 and S17. May interact with IF1 in the 30S initiation complex.</text>
</comment>
<comment type="similarity">
    <text evidence="2">Belongs to the universal ribosomal protein uS12 family.</text>
</comment>
<reference key="1">
    <citation type="journal article" date="2008" name="PLoS Genet.">
        <title>The genome of Borrelia recurrentis, the agent of deadly louse-borne relapsing fever, is a degraded subset of tick-borne Borrelia duttonii.</title>
        <authorList>
            <person name="Lescot M."/>
            <person name="Audic S."/>
            <person name="Robert C."/>
            <person name="Nguyen T.T."/>
            <person name="Blanc G."/>
            <person name="Cutler S.J."/>
            <person name="Wincker P."/>
            <person name="Couloux A."/>
            <person name="Claverie J.-M."/>
            <person name="Raoult D."/>
            <person name="Drancourt M."/>
        </authorList>
    </citation>
    <scope>NUCLEOTIDE SEQUENCE [LARGE SCALE GENOMIC DNA]</scope>
    <source>
        <strain>Ly</strain>
    </source>
</reference>
<dbReference type="EMBL" id="CP000976">
    <property type="protein sequence ID" value="ACH93333.1"/>
    <property type="molecule type" value="Genomic_DNA"/>
</dbReference>
<dbReference type="RefSeq" id="WP_012538144.1">
    <property type="nucleotide sequence ID" value="NC_011229.1"/>
</dbReference>
<dbReference type="SMR" id="B5RLU7"/>
<dbReference type="STRING" id="412419.BDU_381"/>
<dbReference type="KEGG" id="bdu:BDU_381"/>
<dbReference type="eggNOG" id="COG0048">
    <property type="taxonomic scope" value="Bacteria"/>
</dbReference>
<dbReference type="HOGENOM" id="CLU_104295_1_2_12"/>
<dbReference type="OrthoDB" id="9802366at2"/>
<dbReference type="Proteomes" id="UP000000611">
    <property type="component" value="Chromosome"/>
</dbReference>
<dbReference type="GO" id="GO:0015935">
    <property type="term" value="C:small ribosomal subunit"/>
    <property type="evidence" value="ECO:0007669"/>
    <property type="project" value="InterPro"/>
</dbReference>
<dbReference type="GO" id="GO:0019843">
    <property type="term" value="F:rRNA binding"/>
    <property type="evidence" value="ECO:0007669"/>
    <property type="project" value="UniProtKB-UniRule"/>
</dbReference>
<dbReference type="GO" id="GO:0003735">
    <property type="term" value="F:structural constituent of ribosome"/>
    <property type="evidence" value="ECO:0007669"/>
    <property type="project" value="InterPro"/>
</dbReference>
<dbReference type="GO" id="GO:0000049">
    <property type="term" value="F:tRNA binding"/>
    <property type="evidence" value="ECO:0007669"/>
    <property type="project" value="UniProtKB-UniRule"/>
</dbReference>
<dbReference type="GO" id="GO:0006412">
    <property type="term" value="P:translation"/>
    <property type="evidence" value="ECO:0007669"/>
    <property type="project" value="UniProtKB-UniRule"/>
</dbReference>
<dbReference type="CDD" id="cd03368">
    <property type="entry name" value="Ribosomal_S12"/>
    <property type="match status" value="1"/>
</dbReference>
<dbReference type="FunFam" id="2.40.50.140:FF:000001">
    <property type="entry name" value="30S ribosomal protein S12"/>
    <property type="match status" value="1"/>
</dbReference>
<dbReference type="Gene3D" id="2.40.50.140">
    <property type="entry name" value="Nucleic acid-binding proteins"/>
    <property type="match status" value="1"/>
</dbReference>
<dbReference type="HAMAP" id="MF_00403_B">
    <property type="entry name" value="Ribosomal_uS12_B"/>
    <property type="match status" value="1"/>
</dbReference>
<dbReference type="InterPro" id="IPR012340">
    <property type="entry name" value="NA-bd_OB-fold"/>
</dbReference>
<dbReference type="InterPro" id="IPR006032">
    <property type="entry name" value="Ribosomal_uS12"/>
</dbReference>
<dbReference type="InterPro" id="IPR005679">
    <property type="entry name" value="Ribosomal_uS12_bac"/>
</dbReference>
<dbReference type="NCBIfam" id="TIGR00981">
    <property type="entry name" value="rpsL_bact"/>
    <property type="match status" value="1"/>
</dbReference>
<dbReference type="PANTHER" id="PTHR11652">
    <property type="entry name" value="30S RIBOSOMAL PROTEIN S12 FAMILY MEMBER"/>
    <property type="match status" value="1"/>
</dbReference>
<dbReference type="Pfam" id="PF00164">
    <property type="entry name" value="Ribosom_S12_S23"/>
    <property type="match status" value="1"/>
</dbReference>
<dbReference type="PIRSF" id="PIRSF002133">
    <property type="entry name" value="Ribosomal_S12/S23"/>
    <property type="match status" value="1"/>
</dbReference>
<dbReference type="PRINTS" id="PR01034">
    <property type="entry name" value="RIBOSOMALS12"/>
</dbReference>
<dbReference type="SUPFAM" id="SSF50249">
    <property type="entry name" value="Nucleic acid-binding proteins"/>
    <property type="match status" value="1"/>
</dbReference>
<dbReference type="PROSITE" id="PS00055">
    <property type="entry name" value="RIBOSOMAL_S12"/>
    <property type="match status" value="1"/>
</dbReference>
<proteinExistence type="inferred from homology"/>
<keyword id="KW-0488">Methylation</keyword>
<keyword id="KW-0687">Ribonucleoprotein</keyword>
<keyword id="KW-0689">Ribosomal protein</keyword>
<keyword id="KW-0694">RNA-binding</keyword>
<keyword id="KW-0699">rRNA-binding</keyword>
<keyword id="KW-0820">tRNA-binding</keyword>
<gene>
    <name evidence="2" type="primary">rpsL</name>
    <name type="ordered locus">BDU_381</name>
</gene>
<accession>B5RLU7</accession>
<feature type="chain" id="PRO_1000194131" description="Small ribosomal subunit protein uS12">
    <location>
        <begin position="1"/>
        <end position="124"/>
    </location>
</feature>
<feature type="region of interest" description="Disordered" evidence="3">
    <location>
        <begin position="1"/>
        <end position="25"/>
    </location>
</feature>
<feature type="modified residue" description="3-methylthioaspartic acid" evidence="1">
    <location>
        <position position="89"/>
    </location>
</feature>